<keyword id="KW-0963">Cytoplasm</keyword>
<keyword id="KW-0520">NAD</keyword>
<keyword id="KW-0521">NADP</keyword>
<keyword id="KW-0560">Oxidoreductase</keyword>
<proteinExistence type="inferred from homology"/>
<reference key="1">
    <citation type="submission" date="2009-07" db="EMBL/GenBank/DDBJ databases">
        <title>Complete sequence of Pectobacterium carotovorum subsp. carotovorum PC1.</title>
        <authorList>
            <consortium name="US DOE Joint Genome Institute"/>
            <person name="Lucas S."/>
            <person name="Copeland A."/>
            <person name="Lapidus A."/>
            <person name="Glavina del Rio T."/>
            <person name="Tice H."/>
            <person name="Bruce D."/>
            <person name="Goodwin L."/>
            <person name="Pitluck S."/>
            <person name="Munk A.C."/>
            <person name="Brettin T."/>
            <person name="Detter J.C."/>
            <person name="Han C."/>
            <person name="Tapia R."/>
            <person name="Larimer F."/>
            <person name="Land M."/>
            <person name="Hauser L."/>
            <person name="Kyrpides N."/>
            <person name="Mikhailova N."/>
            <person name="Balakrishnan V."/>
            <person name="Glasner J."/>
            <person name="Perna N.T."/>
        </authorList>
    </citation>
    <scope>NUCLEOTIDE SEQUENCE [LARGE SCALE GENOMIC DNA]</scope>
    <source>
        <strain>PC1</strain>
    </source>
</reference>
<name>GHRB_PECCP</name>
<comment type="function">
    <text evidence="1">Catalyzes the NADPH-dependent reduction of glyoxylate and hydroxypyruvate into glycolate and glycerate, respectively.</text>
</comment>
<comment type="catalytic activity">
    <reaction evidence="1">
        <text>glycolate + NADP(+) = glyoxylate + NADPH + H(+)</text>
        <dbReference type="Rhea" id="RHEA:10992"/>
        <dbReference type="ChEBI" id="CHEBI:15378"/>
        <dbReference type="ChEBI" id="CHEBI:29805"/>
        <dbReference type="ChEBI" id="CHEBI:36655"/>
        <dbReference type="ChEBI" id="CHEBI:57783"/>
        <dbReference type="ChEBI" id="CHEBI:58349"/>
        <dbReference type="EC" id="1.1.1.79"/>
    </reaction>
</comment>
<comment type="catalytic activity">
    <reaction evidence="1">
        <text>(R)-glycerate + NAD(+) = 3-hydroxypyruvate + NADH + H(+)</text>
        <dbReference type="Rhea" id="RHEA:17905"/>
        <dbReference type="ChEBI" id="CHEBI:15378"/>
        <dbReference type="ChEBI" id="CHEBI:16659"/>
        <dbReference type="ChEBI" id="CHEBI:17180"/>
        <dbReference type="ChEBI" id="CHEBI:57540"/>
        <dbReference type="ChEBI" id="CHEBI:57945"/>
        <dbReference type="EC" id="1.1.1.81"/>
    </reaction>
</comment>
<comment type="catalytic activity">
    <reaction evidence="1">
        <text>(R)-glycerate + NADP(+) = 3-hydroxypyruvate + NADPH + H(+)</text>
        <dbReference type="Rhea" id="RHEA:18657"/>
        <dbReference type="ChEBI" id="CHEBI:15378"/>
        <dbReference type="ChEBI" id="CHEBI:16659"/>
        <dbReference type="ChEBI" id="CHEBI:17180"/>
        <dbReference type="ChEBI" id="CHEBI:57783"/>
        <dbReference type="ChEBI" id="CHEBI:58349"/>
        <dbReference type="EC" id="1.1.1.81"/>
    </reaction>
</comment>
<comment type="subunit">
    <text evidence="1">Homodimer.</text>
</comment>
<comment type="subcellular location">
    <subcellularLocation>
        <location evidence="1">Cytoplasm</location>
    </subcellularLocation>
</comment>
<comment type="similarity">
    <text evidence="1">Belongs to the D-isomer specific 2-hydroxyacid dehydrogenase family. GhrB subfamily.</text>
</comment>
<accession>C6DJ88</accession>
<protein>
    <recommendedName>
        <fullName evidence="1">Glyoxylate/hydroxypyruvate reductase B</fullName>
        <ecNumber evidence="1">1.1.1.79</ecNumber>
        <ecNumber evidence="1">1.1.1.81</ecNumber>
    </recommendedName>
</protein>
<sequence>MKPSVILYKKIADDLRARLDQHFTVTELDAFPSLDHPALATAEGIIGSGGKVDKDFLQHAPRLRAASTISVGYDTFNVDALNEKGVILMHTPTVLTETVADTVLALMLASARRVVEVAERVKAGEWKGGVDSDWFGTDVHHKTIGILGMGRIGLAVAQRAHFGFSMPVLYNARRHHAEAEQRFNARHCDLDTLLAESDFLCITLPLTTETHHLIGREQLAKMKPSAILINIGRGAVVDEDALTEALVKGTIQGAGLDVFVKEPLPVDSPLLDLPNVVALPHIGSATHETRYDMAACAVDNLIAALSGEVKENCVNPQVLK</sequence>
<organism>
    <name type="scientific">Pectobacterium carotovorum subsp. carotovorum (strain PC1)</name>
    <dbReference type="NCBI Taxonomy" id="561230"/>
    <lineage>
        <taxon>Bacteria</taxon>
        <taxon>Pseudomonadati</taxon>
        <taxon>Pseudomonadota</taxon>
        <taxon>Gammaproteobacteria</taxon>
        <taxon>Enterobacterales</taxon>
        <taxon>Pectobacteriaceae</taxon>
        <taxon>Pectobacterium</taxon>
    </lineage>
</organism>
<gene>
    <name evidence="1" type="primary">ghrB</name>
    <name type="ordered locus">PC1_4173</name>
</gene>
<evidence type="ECO:0000255" key="1">
    <source>
        <dbReference type="HAMAP-Rule" id="MF_01667"/>
    </source>
</evidence>
<dbReference type="EC" id="1.1.1.79" evidence="1"/>
<dbReference type="EC" id="1.1.1.81" evidence="1"/>
<dbReference type="EMBL" id="CP001657">
    <property type="protein sequence ID" value="ACT15187.1"/>
    <property type="molecule type" value="Genomic_DNA"/>
</dbReference>
<dbReference type="RefSeq" id="WP_015842258.1">
    <property type="nucleotide sequence ID" value="NC_012917.1"/>
</dbReference>
<dbReference type="SMR" id="C6DJ88"/>
<dbReference type="STRING" id="561230.PC1_4173"/>
<dbReference type="KEGG" id="pct:PC1_4173"/>
<dbReference type="eggNOG" id="COG1052">
    <property type="taxonomic scope" value="Bacteria"/>
</dbReference>
<dbReference type="HOGENOM" id="CLU_019796_1_2_6"/>
<dbReference type="OrthoDB" id="9805416at2"/>
<dbReference type="Proteomes" id="UP000002736">
    <property type="component" value="Chromosome"/>
</dbReference>
<dbReference type="GO" id="GO:0005829">
    <property type="term" value="C:cytosol"/>
    <property type="evidence" value="ECO:0007669"/>
    <property type="project" value="TreeGrafter"/>
</dbReference>
<dbReference type="GO" id="GO:0005886">
    <property type="term" value="C:plasma membrane"/>
    <property type="evidence" value="ECO:0007669"/>
    <property type="project" value="UniProtKB-UniRule"/>
</dbReference>
<dbReference type="GO" id="GO:0030267">
    <property type="term" value="F:glyoxylate reductase (NADPH) activity"/>
    <property type="evidence" value="ECO:0007669"/>
    <property type="project" value="UniProtKB-UniRule"/>
</dbReference>
<dbReference type="GO" id="GO:0008465">
    <property type="term" value="F:hydroxypyruvate reductase (NADH) activity"/>
    <property type="evidence" value="ECO:0007669"/>
    <property type="project" value="RHEA"/>
</dbReference>
<dbReference type="GO" id="GO:0120509">
    <property type="term" value="F:hydroxypyruvate reductase (NADPH) activity"/>
    <property type="evidence" value="ECO:0007669"/>
    <property type="project" value="RHEA"/>
</dbReference>
<dbReference type="GO" id="GO:0051287">
    <property type="term" value="F:NAD binding"/>
    <property type="evidence" value="ECO:0007669"/>
    <property type="project" value="InterPro"/>
</dbReference>
<dbReference type="CDD" id="cd05301">
    <property type="entry name" value="GDH"/>
    <property type="match status" value="1"/>
</dbReference>
<dbReference type="FunFam" id="3.40.50.720:FF:000026">
    <property type="entry name" value="Glyoxylate/hydroxypyruvate reductase B"/>
    <property type="match status" value="1"/>
</dbReference>
<dbReference type="Gene3D" id="3.40.50.720">
    <property type="entry name" value="NAD(P)-binding Rossmann-like Domain"/>
    <property type="match status" value="2"/>
</dbReference>
<dbReference type="HAMAP" id="MF_01667">
    <property type="entry name" value="2_Hacid_dh_C_GhrB"/>
    <property type="match status" value="1"/>
</dbReference>
<dbReference type="InterPro" id="IPR050223">
    <property type="entry name" value="D-isomer_2-hydroxyacid_DH"/>
</dbReference>
<dbReference type="InterPro" id="IPR006139">
    <property type="entry name" value="D-isomer_2_OHA_DH_cat_dom"/>
</dbReference>
<dbReference type="InterPro" id="IPR029753">
    <property type="entry name" value="D-isomer_DH_CS"/>
</dbReference>
<dbReference type="InterPro" id="IPR006140">
    <property type="entry name" value="D-isomer_DH_NAD-bd"/>
</dbReference>
<dbReference type="InterPro" id="IPR023756">
    <property type="entry name" value="Glyo/OHPyrv_Rdtase_B"/>
</dbReference>
<dbReference type="InterPro" id="IPR036291">
    <property type="entry name" value="NAD(P)-bd_dom_sf"/>
</dbReference>
<dbReference type="NCBIfam" id="NF011938">
    <property type="entry name" value="PRK15409.1"/>
    <property type="match status" value="1"/>
</dbReference>
<dbReference type="PANTHER" id="PTHR10996">
    <property type="entry name" value="2-HYDROXYACID DEHYDROGENASE-RELATED"/>
    <property type="match status" value="1"/>
</dbReference>
<dbReference type="PANTHER" id="PTHR10996:SF283">
    <property type="entry name" value="GLYOXYLATE_HYDROXYPYRUVATE REDUCTASE B"/>
    <property type="match status" value="1"/>
</dbReference>
<dbReference type="Pfam" id="PF00389">
    <property type="entry name" value="2-Hacid_dh"/>
    <property type="match status" value="1"/>
</dbReference>
<dbReference type="Pfam" id="PF02826">
    <property type="entry name" value="2-Hacid_dh_C"/>
    <property type="match status" value="1"/>
</dbReference>
<dbReference type="SUPFAM" id="SSF52283">
    <property type="entry name" value="Formate/glycerate dehydrogenase catalytic domain-like"/>
    <property type="match status" value="1"/>
</dbReference>
<dbReference type="SUPFAM" id="SSF51735">
    <property type="entry name" value="NAD(P)-binding Rossmann-fold domains"/>
    <property type="match status" value="1"/>
</dbReference>
<dbReference type="PROSITE" id="PS00671">
    <property type="entry name" value="D_2_HYDROXYACID_DH_3"/>
    <property type="match status" value="1"/>
</dbReference>
<feature type="chain" id="PRO_1000215880" description="Glyoxylate/hydroxypyruvate reductase B">
    <location>
        <begin position="1"/>
        <end position="320"/>
    </location>
</feature>
<feature type="active site" evidence="1">
    <location>
        <position position="233"/>
    </location>
</feature>
<feature type="active site" evidence="1">
    <location>
        <position position="262"/>
    </location>
</feature>
<feature type="active site" description="Proton donor" evidence="1">
    <location>
        <position position="281"/>
    </location>
</feature>